<dbReference type="EMBL" id="CP000142">
    <property type="protein sequence ID" value="ABA89640.1"/>
    <property type="molecule type" value="Genomic_DNA"/>
</dbReference>
<dbReference type="RefSeq" id="WP_011342166.1">
    <property type="nucleotide sequence ID" value="NC_007498.2"/>
</dbReference>
<dbReference type="SMR" id="Q3A1W7"/>
<dbReference type="STRING" id="338963.Pcar_2401"/>
<dbReference type="KEGG" id="pca:Pcar_2401"/>
<dbReference type="eggNOG" id="COG1641">
    <property type="taxonomic scope" value="Bacteria"/>
</dbReference>
<dbReference type="HOGENOM" id="CLU_028523_2_1_7"/>
<dbReference type="OrthoDB" id="9765625at2"/>
<dbReference type="Proteomes" id="UP000002534">
    <property type="component" value="Chromosome"/>
</dbReference>
<dbReference type="GO" id="GO:0016829">
    <property type="term" value="F:lyase activity"/>
    <property type="evidence" value="ECO:0007669"/>
    <property type="project" value="UniProtKB-UniRule"/>
</dbReference>
<dbReference type="GO" id="GO:0016151">
    <property type="term" value="F:nickel cation binding"/>
    <property type="evidence" value="ECO:0007669"/>
    <property type="project" value="UniProtKB-UniRule"/>
</dbReference>
<dbReference type="Gene3D" id="3.10.20.300">
    <property type="entry name" value="mk0293 like domain"/>
    <property type="match status" value="1"/>
</dbReference>
<dbReference type="Gene3D" id="3.30.70.1380">
    <property type="entry name" value="Transcriptional regulatory protein pf0864 domain like"/>
    <property type="match status" value="1"/>
</dbReference>
<dbReference type="HAMAP" id="MF_01074">
    <property type="entry name" value="LarC"/>
    <property type="match status" value="1"/>
</dbReference>
<dbReference type="InterPro" id="IPR002822">
    <property type="entry name" value="Ni_insertion"/>
</dbReference>
<dbReference type="NCBIfam" id="TIGR00299">
    <property type="entry name" value="nickel pincer cofactor biosynthesis protein LarC"/>
    <property type="match status" value="1"/>
</dbReference>
<dbReference type="PANTHER" id="PTHR36566">
    <property type="entry name" value="NICKEL INSERTION PROTEIN-RELATED"/>
    <property type="match status" value="1"/>
</dbReference>
<dbReference type="PANTHER" id="PTHR36566:SF1">
    <property type="entry name" value="PYRIDINIUM-3,5-BISTHIOCARBOXYLIC ACID MONONUCLEOTIDE NICKEL INSERTION PROTEIN"/>
    <property type="match status" value="1"/>
</dbReference>
<dbReference type="Pfam" id="PF01969">
    <property type="entry name" value="Ni_insertion"/>
    <property type="match status" value="1"/>
</dbReference>
<sequence length="394" mass="43639">MSLLFLDTFAGISGDMFLGLLVDLGVPLPSIQEGLDRLPVTGYQLHQQRTERQHVAACKIIVEHEEQHHHRTWRDIDRMLAESSLKPTVVDLARRIFRRIGEAEAKIHGRALDEVHFHEVGAIDSIVDIVGAAVGLDYLHPDRIVCAPLPLTRGTVHCAHGSFPLPAPATLEILRGLPTVGDTAEVELVTPTGAAIAAETAEFGDLPAMTLERVGYGAGDRQLSDRPNLLRGLLGTADDPWEGETDRITILECHLDDANPEWLGALMEHLLEEGALDVAFAPLQMKKNRPGVHLTVLAPQDKTVALARRILRESTAGGLRYQEATRFKLRRQIERLTTPLGEVHIKLFYEGDKLLRLAPEFDSCQKLAQSSGLPLPEIYRLAEQTAYDFFRKKG</sequence>
<accession>Q3A1W7</accession>
<name>Y2401_SYNC1</name>
<evidence type="ECO:0000255" key="1">
    <source>
        <dbReference type="HAMAP-Rule" id="MF_01074"/>
    </source>
</evidence>
<protein>
    <recommendedName>
        <fullName evidence="1">Putative nickel insertion protein</fullName>
    </recommendedName>
</protein>
<organism>
    <name type="scientific">Syntrophotalea carbinolica (strain DSM 2380 / NBRC 103641 / GraBd1)</name>
    <name type="common">Pelobacter carbinolicus</name>
    <dbReference type="NCBI Taxonomy" id="338963"/>
    <lineage>
        <taxon>Bacteria</taxon>
        <taxon>Pseudomonadati</taxon>
        <taxon>Thermodesulfobacteriota</taxon>
        <taxon>Desulfuromonadia</taxon>
        <taxon>Desulfuromonadales</taxon>
        <taxon>Syntrophotaleaceae</taxon>
        <taxon>Syntrophotalea</taxon>
    </lineage>
</organism>
<proteinExistence type="inferred from homology"/>
<gene>
    <name type="ordered locus">Pcar_2401</name>
</gene>
<comment type="similarity">
    <text evidence="1">Belongs to the LarC family.</text>
</comment>
<reference key="1">
    <citation type="submission" date="2005-10" db="EMBL/GenBank/DDBJ databases">
        <title>Complete sequence of Pelobacter carbinolicus DSM 2380.</title>
        <authorList>
            <person name="Copeland A."/>
            <person name="Lucas S."/>
            <person name="Lapidus A."/>
            <person name="Barry K."/>
            <person name="Detter J.C."/>
            <person name="Glavina T."/>
            <person name="Hammon N."/>
            <person name="Israni S."/>
            <person name="Pitluck S."/>
            <person name="Chertkov O."/>
            <person name="Schmutz J."/>
            <person name="Larimer F."/>
            <person name="Land M."/>
            <person name="Kyrpides N."/>
            <person name="Ivanova N."/>
            <person name="Richardson P."/>
        </authorList>
    </citation>
    <scope>NUCLEOTIDE SEQUENCE [LARGE SCALE GENOMIC DNA]</scope>
    <source>
        <strain>DSM 2380 / NBRC 103641 / GraBd1</strain>
    </source>
</reference>
<keyword id="KW-0533">Nickel</keyword>
<keyword id="KW-1185">Reference proteome</keyword>
<feature type="chain" id="PRO_1000064656" description="Putative nickel insertion protein">
    <location>
        <begin position="1"/>
        <end position="394"/>
    </location>
</feature>